<protein>
    <recommendedName>
        <fullName>Riboflavin biosynthesis protein PYRD, chloroplastic</fullName>
    </recommendedName>
    <domain>
        <recommendedName>
            <fullName>Diaminohydroxyphosphoribosylaminopyrimidine deaminase</fullName>
            <shortName>DRAP deaminase</shortName>
            <ecNumber>3.5.4.26</ecNumber>
        </recommendedName>
        <alternativeName>
            <fullName>Riboflavin-specific deaminase</fullName>
        </alternativeName>
    </domain>
    <domain>
        <recommendedName>
            <fullName>Inactive 5-amino-6-(5-phosphoribosylamino)uracil reductase</fullName>
        </recommendedName>
        <alternativeName>
            <fullName>HTP reductase</fullName>
        </alternativeName>
    </domain>
</protein>
<sequence>MQISCLPISIPSITPRTSIPLLPSLSSNPRRIFNLTSLQSPNHCFFKRLHKSQTGFSNPVLAAMRREEDVEVDDSFYMRKCVELAKRAIGCTSPNPMVGCVIVKDGDIVGQGFHPKAGQPHAEVFALRDAGELAENATAYVSLEPCNHYGRTPPCTEALIKAKVRRVVIGMVDPNPIVFSSGISRLKDAGIDVTVSVEEELCKKMNEGFIHRMLTGKPFLALRYSMSVNGCLLDKIGQGASDSGGYYSKLLQEYDAIILSSSLSDELSSISSQEAINVSIQPIQIIVASNAQQSHILASSHTVEESGPKVVVFTAKESVAESGISSSGVETVVLEKINLDSILDYCYNRGLCSVLLDLRGNVKDLEVLLRDGFEQKLLQKVIIEVLPEWSTKDERQIASMKWLESKHVKDLQSKQLGGSVLLEGYF</sequence>
<comment type="function">
    <text evidence="4 5">Monofunctional pyrimidine deaminase involved in the riboflavin biosynthesis pathway. Also has a reductase domain that lacks catalytically essential substrate-binding residues.</text>
</comment>
<comment type="catalytic activity">
    <reaction evidence="4">
        <text>2,5-diamino-6-hydroxy-4-(5-phosphoribosylamino)-pyrimidine + H2O + H(+) = 5-amino-6-(5-phospho-D-ribosylamino)uracil + NH4(+)</text>
        <dbReference type="Rhea" id="RHEA:21868"/>
        <dbReference type="ChEBI" id="CHEBI:15377"/>
        <dbReference type="ChEBI" id="CHEBI:15378"/>
        <dbReference type="ChEBI" id="CHEBI:28938"/>
        <dbReference type="ChEBI" id="CHEBI:58453"/>
        <dbReference type="ChEBI" id="CHEBI:58614"/>
        <dbReference type="EC" id="3.5.4.26"/>
    </reaction>
</comment>
<comment type="cofactor">
    <cofactor evidence="4">
        <name>Zn(2+)</name>
        <dbReference type="ChEBI" id="CHEBI:29105"/>
    </cofactor>
    <text evidence="4">Binds 1 zinc ion.</text>
</comment>
<comment type="biophysicochemical properties">
    <kinetics>
        <Vmax evidence="4">0.9 umol/min/mg enzyme</Vmax>
    </kinetics>
</comment>
<comment type="pathway">
    <text>Cofactor biosynthesis; riboflavin biosynthesis; 5-amino-6-(D-ribitylamino)uracil from GTP: step 2/4.</text>
</comment>
<comment type="subcellular location">
    <subcellularLocation>
        <location evidence="5">Plastid</location>
        <location evidence="5">Chloroplast</location>
    </subcellularLocation>
</comment>
<comment type="domain">
    <text evidence="4">The N-terminal domain (64-250) is required for the deaminase activity.</text>
</comment>
<comment type="miscellaneous">
    <text>Unlike bacteria that have a bifunctional, two-domain RibD enzyme, plants have a monofunctional reductase and a monofunctional deaminase, each having an enzymatically inactive domain.</text>
</comment>
<comment type="sequence caution" evidence="6">
    <conflict type="erroneous initiation">
        <sequence resource="EMBL-CDS" id="CAB45891"/>
    </conflict>
    <text>Truncated N-terminus.</text>
</comment>
<comment type="sequence caution" evidence="6">
    <conflict type="erroneous initiation">
        <sequence resource="EMBL-CDS" id="CAB79096"/>
    </conflict>
    <text>Truncated N-terminus.</text>
</comment>
<organism>
    <name type="scientific">Arabidopsis thaliana</name>
    <name type="common">Mouse-ear cress</name>
    <dbReference type="NCBI Taxonomy" id="3702"/>
    <lineage>
        <taxon>Eukaryota</taxon>
        <taxon>Viridiplantae</taxon>
        <taxon>Streptophyta</taxon>
        <taxon>Embryophyta</taxon>
        <taxon>Tracheophyta</taxon>
        <taxon>Spermatophyta</taxon>
        <taxon>Magnoliopsida</taxon>
        <taxon>eudicotyledons</taxon>
        <taxon>Gunneridae</taxon>
        <taxon>Pentapetalae</taxon>
        <taxon>rosids</taxon>
        <taxon>malvids</taxon>
        <taxon>Brassicales</taxon>
        <taxon>Brassicaceae</taxon>
        <taxon>Camelineae</taxon>
        <taxon>Arabidopsis</taxon>
    </lineage>
</organism>
<reference key="1">
    <citation type="journal article" date="1999" name="Nature">
        <title>Sequence and analysis of chromosome 4 of the plant Arabidopsis thaliana.</title>
        <authorList>
            <person name="Mayer K.F.X."/>
            <person name="Schueller C."/>
            <person name="Wambutt R."/>
            <person name="Murphy G."/>
            <person name="Volckaert G."/>
            <person name="Pohl T."/>
            <person name="Duesterhoeft A."/>
            <person name="Stiekema W."/>
            <person name="Entian K.-D."/>
            <person name="Terryn N."/>
            <person name="Harris B."/>
            <person name="Ansorge W."/>
            <person name="Brandt P."/>
            <person name="Grivell L.A."/>
            <person name="Rieger M."/>
            <person name="Weichselgartner M."/>
            <person name="de Simone V."/>
            <person name="Obermaier B."/>
            <person name="Mache R."/>
            <person name="Mueller M."/>
            <person name="Kreis M."/>
            <person name="Delseny M."/>
            <person name="Puigdomenech P."/>
            <person name="Watson M."/>
            <person name="Schmidtheini T."/>
            <person name="Reichert B."/>
            <person name="Portetelle D."/>
            <person name="Perez-Alonso M."/>
            <person name="Boutry M."/>
            <person name="Bancroft I."/>
            <person name="Vos P."/>
            <person name="Hoheisel J."/>
            <person name="Zimmermann W."/>
            <person name="Wedler H."/>
            <person name="Ridley P."/>
            <person name="Langham S.-A."/>
            <person name="McCullagh B."/>
            <person name="Bilham L."/>
            <person name="Robben J."/>
            <person name="van der Schueren J."/>
            <person name="Grymonprez B."/>
            <person name="Chuang Y.-J."/>
            <person name="Vandenbussche F."/>
            <person name="Braeken M."/>
            <person name="Weltjens I."/>
            <person name="Voet M."/>
            <person name="Bastiaens I."/>
            <person name="Aert R."/>
            <person name="Defoor E."/>
            <person name="Weitzenegger T."/>
            <person name="Bothe G."/>
            <person name="Ramsperger U."/>
            <person name="Hilbert H."/>
            <person name="Braun M."/>
            <person name="Holzer E."/>
            <person name="Brandt A."/>
            <person name="Peters S."/>
            <person name="van Staveren M."/>
            <person name="Dirkse W."/>
            <person name="Mooijman P."/>
            <person name="Klein Lankhorst R."/>
            <person name="Rose M."/>
            <person name="Hauf J."/>
            <person name="Koetter P."/>
            <person name="Berneiser S."/>
            <person name="Hempel S."/>
            <person name="Feldpausch M."/>
            <person name="Lamberth S."/>
            <person name="Van den Daele H."/>
            <person name="De Keyser A."/>
            <person name="Buysshaert C."/>
            <person name="Gielen J."/>
            <person name="Villarroel R."/>
            <person name="De Clercq R."/>
            <person name="van Montagu M."/>
            <person name="Rogers J."/>
            <person name="Cronin A."/>
            <person name="Quail M.A."/>
            <person name="Bray-Allen S."/>
            <person name="Clark L."/>
            <person name="Doggett J."/>
            <person name="Hall S."/>
            <person name="Kay M."/>
            <person name="Lennard N."/>
            <person name="McLay K."/>
            <person name="Mayes R."/>
            <person name="Pettett A."/>
            <person name="Rajandream M.A."/>
            <person name="Lyne M."/>
            <person name="Benes V."/>
            <person name="Rechmann S."/>
            <person name="Borkova D."/>
            <person name="Bloecker H."/>
            <person name="Scharfe M."/>
            <person name="Grimm M."/>
            <person name="Loehnert T.-H."/>
            <person name="Dose S."/>
            <person name="de Haan M."/>
            <person name="Maarse A.C."/>
            <person name="Schaefer M."/>
            <person name="Mueller-Auer S."/>
            <person name="Gabel C."/>
            <person name="Fuchs M."/>
            <person name="Fartmann B."/>
            <person name="Granderath K."/>
            <person name="Dauner D."/>
            <person name="Herzl A."/>
            <person name="Neumann S."/>
            <person name="Argiriou A."/>
            <person name="Vitale D."/>
            <person name="Liguori R."/>
            <person name="Piravandi E."/>
            <person name="Massenet O."/>
            <person name="Quigley F."/>
            <person name="Clabauld G."/>
            <person name="Muendlein A."/>
            <person name="Felber R."/>
            <person name="Schnabl S."/>
            <person name="Hiller R."/>
            <person name="Schmidt W."/>
            <person name="Lecharny A."/>
            <person name="Aubourg S."/>
            <person name="Chefdor F."/>
            <person name="Cooke R."/>
            <person name="Berger C."/>
            <person name="Monfort A."/>
            <person name="Casacuberta E."/>
            <person name="Gibbons T."/>
            <person name="Weber N."/>
            <person name="Vandenbol M."/>
            <person name="Bargues M."/>
            <person name="Terol J."/>
            <person name="Torres A."/>
            <person name="Perez-Perez A."/>
            <person name="Purnelle B."/>
            <person name="Bent E."/>
            <person name="Johnson S."/>
            <person name="Tacon D."/>
            <person name="Jesse T."/>
            <person name="Heijnen L."/>
            <person name="Schwarz S."/>
            <person name="Scholler P."/>
            <person name="Heber S."/>
            <person name="Francs P."/>
            <person name="Bielke C."/>
            <person name="Frishman D."/>
            <person name="Haase D."/>
            <person name="Lemcke K."/>
            <person name="Mewes H.-W."/>
            <person name="Stocker S."/>
            <person name="Zaccaria P."/>
            <person name="Bevan M."/>
            <person name="Wilson R.K."/>
            <person name="de la Bastide M."/>
            <person name="Habermann K."/>
            <person name="Parnell L."/>
            <person name="Dedhia N."/>
            <person name="Gnoj L."/>
            <person name="Schutz K."/>
            <person name="Huang E."/>
            <person name="Spiegel L."/>
            <person name="Sekhon M."/>
            <person name="Murray J."/>
            <person name="Sheet P."/>
            <person name="Cordes M."/>
            <person name="Abu-Threideh J."/>
            <person name="Stoneking T."/>
            <person name="Kalicki J."/>
            <person name="Graves T."/>
            <person name="Harmon G."/>
            <person name="Edwards J."/>
            <person name="Latreille P."/>
            <person name="Courtney L."/>
            <person name="Cloud J."/>
            <person name="Abbott A."/>
            <person name="Scott K."/>
            <person name="Johnson D."/>
            <person name="Minx P."/>
            <person name="Bentley D."/>
            <person name="Fulton B."/>
            <person name="Miller N."/>
            <person name="Greco T."/>
            <person name="Kemp K."/>
            <person name="Kramer J."/>
            <person name="Fulton L."/>
            <person name="Mardis E."/>
            <person name="Dante M."/>
            <person name="Pepin K."/>
            <person name="Hillier L.W."/>
            <person name="Nelson J."/>
            <person name="Spieth J."/>
            <person name="Ryan E."/>
            <person name="Andrews S."/>
            <person name="Geisel C."/>
            <person name="Layman D."/>
            <person name="Du H."/>
            <person name="Ali J."/>
            <person name="Berghoff A."/>
            <person name="Jones K."/>
            <person name="Drone K."/>
            <person name="Cotton M."/>
            <person name="Joshu C."/>
            <person name="Antonoiu B."/>
            <person name="Zidanic M."/>
            <person name="Strong C."/>
            <person name="Sun H."/>
            <person name="Lamar B."/>
            <person name="Yordan C."/>
            <person name="Ma P."/>
            <person name="Zhong J."/>
            <person name="Preston R."/>
            <person name="Vil D."/>
            <person name="Shekher M."/>
            <person name="Matero A."/>
            <person name="Shah R."/>
            <person name="Swaby I.K."/>
            <person name="O'Shaughnessy A."/>
            <person name="Rodriguez M."/>
            <person name="Hoffman J."/>
            <person name="Till S."/>
            <person name="Granat S."/>
            <person name="Shohdy N."/>
            <person name="Hasegawa A."/>
            <person name="Hameed A."/>
            <person name="Lodhi M."/>
            <person name="Johnson A."/>
            <person name="Chen E."/>
            <person name="Marra M.A."/>
            <person name="Martienssen R."/>
            <person name="McCombie W.R."/>
        </authorList>
    </citation>
    <scope>NUCLEOTIDE SEQUENCE [LARGE SCALE GENOMIC DNA]</scope>
    <source>
        <strain>cv. Columbia</strain>
    </source>
</reference>
<reference key="2">
    <citation type="journal article" date="2017" name="Plant J.">
        <title>Araport11: a complete reannotation of the Arabidopsis thaliana reference genome.</title>
        <authorList>
            <person name="Cheng C.Y."/>
            <person name="Krishnakumar V."/>
            <person name="Chan A.P."/>
            <person name="Thibaud-Nissen F."/>
            <person name="Schobel S."/>
            <person name="Town C.D."/>
        </authorList>
    </citation>
    <scope>GENOME REANNOTATION</scope>
    <source>
        <strain>cv. Columbia</strain>
    </source>
</reference>
<reference key="3">
    <citation type="journal article" date="2002" name="Science">
        <title>Functional annotation of a full-length Arabidopsis cDNA collection.</title>
        <authorList>
            <person name="Seki M."/>
            <person name="Narusaka M."/>
            <person name="Kamiya A."/>
            <person name="Ishida J."/>
            <person name="Satou M."/>
            <person name="Sakurai T."/>
            <person name="Nakajima M."/>
            <person name="Enju A."/>
            <person name="Akiyama K."/>
            <person name="Oono Y."/>
            <person name="Muramatsu M."/>
            <person name="Hayashizaki Y."/>
            <person name="Kawai J."/>
            <person name="Carninci P."/>
            <person name="Itoh M."/>
            <person name="Ishii Y."/>
            <person name="Arakawa T."/>
            <person name="Shibata K."/>
            <person name="Shinagawa A."/>
            <person name="Shinozaki K."/>
        </authorList>
    </citation>
    <scope>NUCLEOTIDE SEQUENCE [LARGE SCALE MRNA]</scope>
    <source>
        <strain>cv. Columbia</strain>
    </source>
</reference>
<reference key="4">
    <citation type="journal article" date="2003" name="Science">
        <title>Empirical analysis of transcriptional activity in the Arabidopsis genome.</title>
        <authorList>
            <person name="Yamada K."/>
            <person name="Lim J."/>
            <person name="Dale J.M."/>
            <person name="Chen H."/>
            <person name="Shinn P."/>
            <person name="Palm C.J."/>
            <person name="Southwick A.M."/>
            <person name="Wu H.C."/>
            <person name="Kim C.J."/>
            <person name="Nguyen M."/>
            <person name="Pham P.K."/>
            <person name="Cheuk R.F."/>
            <person name="Karlin-Newmann G."/>
            <person name="Liu S.X."/>
            <person name="Lam B."/>
            <person name="Sakano H."/>
            <person name="Wu T."/>
            <person name="Yu G."/>
            <person name="Miranda M."/>
            <person name="Quach H.L."/>
            <person name="Tripp M."/>
            <person name="Chang C.H."/>
            <person name="Lee J.M."/>
            <person name="Toriumi M.J."/>
            <person name="Chan M.M."/>
            <person name="Tang C.C."/>
            <person name="Onodera C.S."/>
            <person name="Deng J.M."/>
            <person name="Akiyama K."/>
            <person name="Ansari Y."/>
            <person name="Arakawa T."/>
            <person name="Banh J."/>
            <person name="Banno F."/>
            <person name="Bowser L."/>
            <person name="Brooks S.Y."/>
            <person name="Carninci P."/>
            <person name="Chao Q."/>
            <person name="Choy N."/>
            <person name="Enju A."/>
            <person name="Goldsmith A.D."/>
            <person name="Gurjal M."/>
            <person name="Hansen N.F."/>
            <person name="Hayashizaki Y."/>
            <person name="Johnson-Hopson C."/>
            <person name="Hsuan V.W."/>
            <person name="Iida K."/>
            <person name="Karnes M."/>
            <person name="Khan S."/>
            <person name="Koesema E."/>
            <person name="Ishida J."/>
            <person name="Jiang P.X."/>
            <person name="Jones T."/>
            <person name="Kawai J."/>
            <person name="Kamiya A."/>
            <person name="Meyers C."/>
            <person name="Nakajima M."/>
            <person name="Narusaka M."/>
            <person name="Seki M."/>
            <person name="Sakurai T."/>
            <person name="Satou M."/>
            <person name="Tamse R."/>
            <person name="Vaysberg M."/>
            <person name="Wallender E.K."/>
            <person name="Wong C."/>
            <person name="Yamamura Y."/>
            <person name="Yuan S."/>
            <person name="Shinozaki K."/>
            <person name="Davis R.W."/>
            <person name="Theologis A."/>
            <person name="Ecker J.R."/>
        </authorList>
    </citation>
    <scope>NUCLEOTIDE SEQUENCE [LARGE SCALE MRNA]</scope>
    <source>
        <strain>cv. Columbia</strain>
    </source>
</reference>
<reference key="5">
    <citation type="submission" date="2002-03" db="EMBL/GenBank/DDBJ databases">
        <title>Full-length cDNA from Arabidopsis thaliana.</title>
        <authorList>
            <person name="Brover V.V."/>
            <person name="Troukhan M.E."/>
            <person name="Alexandrov N.A."/>
            <person name="Lu Y.-P."/>
            <person name="Flavell R.B."/>
            <person name="Feldmann K.A."/>
        </authorList>
    </citation>
    <scope>NUCLEOTIDE SEQUENCE [LARGE SCALE MRNA]</scope>
</reference>
<reference key="6">
    <citation type="journal article" date="2004" name="J. Biol. Chem.">
        <title>Evolution of vitamin B2 biosynthesis: structural and functional similarity between pyrimidine deaminases of eubacterial and plant origin.</title>
        <authorList>
            <person name="Fischer M."/>
            <person name="Roemisch W."/>
            <person name="Saller S."/>
            <person name="Illarionov B."/>
            <person name="Richter G."/>
            <person name="Rohdich F."/>
            <person name="Eisenreich W."/>
            <person name="Bacher A."/>
        </authorList>
    </citation>
    <scope>FUNCTION</scope>
    <scope>CATALYTIC ACTIVITY</scope>
    <scope>COFACTOR</scope>
    <scope>BIOPHYSICOCHEMICAL PROPERTIES</scope>
    <scope>DOMAIN</scope>
</reference>
<reference key="7">
    <citation type="journal article" date="2013" name="Plant Physiol.">
        <title>Identification and characterization of the missing pyrimidine reductase in the plant riboflavin biosynthesis pathway.</title>
        <authorList>
            <person name="Hasnain G."/>
            <person name="Frelin O."/>
            <person name="Roje S."/>
            <person name="Ellens K.W."/>
            <person name="Ali K."/>
            <person name="Guan J.C."/>
            <person name="Garrett T.J."/>
            <person name="de Crecy-Lagard V."/>
            <person name="Gregory J.F. III"/>
            <person name="McCarty D.R."/>
            <person name="Hanson A.D."/>
        </authorList>
    </citation>
    <scope>FUNCTION</scope>
    <scope>SUBCELLULAR LOCATION</scope>
</reference>
<proteinExistence type="evidence at protein level"/>
<accession>Q8GWP5</accession>
<accession>Q8L8N0</accession>
<accession>Q9SUB7</accession>
<dbReference type="EC" id="3.5.4.26"/>
<dbReference type="EMBL" id="AL080282">
    <property type="protein sequence ID" value="CAB45891.1"/>
    <property type="status" value="ALT_INIT"/>
    <property type="molecule type" value="Genomic_DNA"/>
</dbReference>
<dbReference type="EMBL" id="AL161554">
    <property type="protein sequence ID" value="CAB79096.1"/>
    <property type="status" value="ALT_INIT"/>
    <property type="molecule type" value="Genomic_DNA"/>
</dbReference>
<dbReference type="EMBL" id="CP002687">
    <property type="protein sequence ID" value="AEE84379.1"/>
    <property type="molecule type" value="Genomic_DNA"/>
</dbReference>
<dbReference type="EMBL" id="AK118717">
    <property type="protein sequence ID" value="BAC43311.1"/>
    <property type="molecule type" value="mRNA"/>
</dbReference>
<dbReference type="EMBL" id="BT006051">
    <property type="protein sequence ID" value="AAP04036.1"/>
    <property type="molecule type" value="mRNA"/>
</dbReference>
<dbReference type="EMBL" id="AY088903">
    <property type="protein sequence ID" value="AAM67209.1"/>
    <property type="molecule type" value="mRNA"/>
</dbReference>
<dbReference type="PIR" id="T10638">
    <property type="entry name" value="T10638"/>
</dbReference>
<dbReference type="RefSeq" id="NP_567618.1">
    <property type="nucleotide sequence ID" value="NM_118214.4"/>
</dbReference>
<dbReference type="SMR" id="Q8GWP5"/>
<dbReference type="BioGRID" id="13134">
    <property type="interactions" value="1"/>
</dbReference>
<dbReference type="FunCoup" id="Q8GWP5">
    <property type="interactions" value="1032"/>
</dbReference>
<dbReference type="STRING" id="3702.Q8GWP5"/>
<dbReference type="PaxDb" id="3702-AT4G20960.1"/>
<dbReference type="ProteomicsDB" id="236185"/>
<dbReference type="EnsemblPlants" id="AT4G20960.1">
    <property type="protein sequence ID" value="AT4G20960.1"/>
    <property type="gene ID" value="AT4G20960"/>
</dbReference>
<dbReference type="GeneID" id="827843"/>
<dbReference type="Gramene" id="AT4G20960.1">
    <property type="protein sequence ID" value="AT4G20960.1"/>
    <property type="gene ID" value="AT4G20960"/>
</dbReference>
<dbReference type="KEGG" id="ath:AT4G20960"/>
<dbReference type="Araport" id="AT4G20960"/>
<dbReference type="TAIR" id="AT4G20960">
    <property type="gene designation" value="PYRD"/>
</dbReference>
<dbReference type="eggNOG" id="KOG1018">
    <property type="taxonomic scope" value="Eukaryota"/>
</dbReference>
<dbReference type="HOGENOM" id="CLU_036590_2_0_1"/>
<dbReference type="InParanoid" id="Q8GWP5"/>
<dbReference type="OMA" id="GHYMRRC"/>
<dbReference type="PhylomeDB" id="Q8GWP5"/>
<dbReference type="BioCyc" id="ARA:AT4G20960-MONOMER"/>
<dbReference type="BioCyc" id="MetaCyc:AT4G20960-MONOMER"/>
<dbReference type="UniPathway" id="UPA00275">
    <property type="reaction ID" value="UER00401"/>
</dbReference>
<dbReference type="PRO" id="PR:Q8GWP5"/>
<dbReference type="Proteomes" id="UP000006548">
    <property type="component" value="Chromosome 4"/>
</dbReference>
<dbReference type="ExpressionAtlas" id="Q8GWP5">
    <property type="expression patterns" value="baseline and differential"/>
</dbReference>
<dbReference type="GO" id="GO:0009507">
    <property type="term" value="C:chloroplast"/>
    <property type="evidence" value="ECO:0007005"/>
    <property type="project" value="TAIR"/>
</dbReference>
<dbReference type="GO" id="GO:0009570">
    <property type="term" value="C:chloroplast stroma"/>
    <property type="evidence" value="ECO:0007005"/>
    <property type="project" value="TAIR"/>
</dbReference>
<dbReference type="GO" id="GO:0008835">
    <property type="term" value="F:diaminohydroxyphosphoribosylaminopyrimidine deaminase activity"/>
    <property type="evidence" value="ECO:0007669"/>
    <property type="project" value="UniProtKB-EC"/>
</dbReference>
<dbReference type="GO" id="GO:0008270">
    <property type="term" value="F:zinc ion binding"/>
    <property type="evidence" value="ECO:0007669"/>
    <property type="project" value="InterPro"/>
</dbReference>
<dbReference type="GO" id="GO:0009231">
    <property type="term" value="P:riboflavin biosynthetic process"/>
    <property type="evidence" value="ECO:0000314"/>
    <property type="project" value="TAIR"/>
</dbReference>
<dbReference type="CDD" id="cd01284">
    <property type="entry name" value="Riboflavin_deaminase-reductase"/>
    <property type="match status" value="1"/>
</dbReference>
<dbReference type="FunFam" id="3.40.430.10:FF:000031">
    <property type="entry name" value="Riboflavin biosynthesis protein PYRD, chloroplastic"/>
    <property type="match status" value="1"/>
</dbReference>
<dbReference type="FunFam" id="3.40.140.10:FF:000025">
    <property type="entry name" value="Riboflavin biosynthesis protein RibD"/>
    <property type="match status" value="1"/>
</dbReference>
<dbReference type="Gene3D" id="3.40.140.10">
    <property type="entry name" value="Cytidine Deaminase, domain 2"/>
    <property type="match status" value="1"/>
</dbReference>
<dbReference type="Gene3D" id="3.40.430.10">
    <property type="entry name" value="Dihydrofolate Reductase, subunit A"/>
    <property type="match status" value="1"/>
</dbReference>
<dbReference type="InterPro" id="IPR016192">
    <property type="entry name" value="APOBEC/CMP_deaminase_Zn-bd"/>
</dbReference>
<dbReference type="InterPro" id="IPR002125">
    <property type="entry name" value="CMP_dCMP_dom"/>
</dbReference>
<dbReference type="InterPro" id="IPR016193">
    <property type="entry name" value="Cytidine_deaminase-like"/>
</dbReference>
<dbReference type="InterPro" id="IPR024072">
    <property type="entry name" value="DHFR-like_dom_sf"/>
</dbReference>
<dbReference type="InterPro" id="IPR004794">
    <property type="entry name" value="Eubact_RibD"/>
</dbReference>
<dbReference type="NCBIfam" id="TIGR00326">
    <property type="entry name" value="eubact_ribD"/>
    <property type="match status" value="1"/>
</dbReference>
<dbReference type="PANTHER" id="PTHR11079">
    <property type="entry name" value="CYTOSINE DEAMINASE FAMILY MEMBER"/>
    <property type="match status" value="1"/>
</dbReference>
<dbReference type="PANTHER" id="PTHR11079:SF162">
    <property type="entry name" value="RIBOFLAVIN BIOSYNTHESIS PROTEIN PYRD, CHLOROPLASTIC"/>
    <property type="match status" value="1"/>
</dbReference>
<dbReference type="Pfam" id="PF00383">
    <property type="entry name" value="dCMP_cyt_deam_1"/>
    <property type="match status" value="1"/>
</dbReference>
<dbReference type="SUPFAM" id="SSF53927">
    <property type="entry name" value="Cytidine deaminase-like"/>
    <property type="match status" value="1"/>
</dbReference>
<dbReference type="SUPFAM" id="SSF53597">
    <property type="entry name" value="Dihydrofolate reductase-like"/>
    <property type="match status" value="1"/>
</dbReference>
<dbReference type="PROSITE" id="PS00903">
    <property type="entry name" value="CYT_DCMP_DEAMINASES_1"/>
    <property type="match status" value="1"/>
</dbReference>
<dbReference type="PROSITE" id="PS51747">
    <property type="entry name" value="CYT_DCMP_DEAMINASES_2"/>
    <property type="match status" value="1"/>
</dbReference>
<evidence type="ECO:0000250" key="1"/>
<evidence type="ECO:0000255" key="2"/>
<evidence type="ECO:0000255" key="3">
    <source>
        <dbReference type="PROSITE-ProRule" id="PRU01083"/>
    </source>
</evidence>
<evidence type="ECO:0000269" key="4">
    <source>
    </source>
</evidence>
<evidence type="ECO:0000269" key="5">
    <source>
    </source>
</evidence>
<evidence type="ECO:0000305" key="6"/>
<name>RIBD_ARATH</name>
<keyword id="KW-0150">Chloroplast</keyword>
<keyword id="KW-0378">Hydrolase</keyword>
<keyword id="KW-0479">Metal-binding</keyword>
<keyword id="KW-0934">Plastid</keyword>
<keyword id="KW-1185">Reference proteome</keyword>
<keyword id="KW-0809">Transit peptide</keyword>
<keyword id="KW-0862">Zinc</keyword>
<gene>
    <name type="primary">PYRD</name>
    <name type="ordered locus">At4g20960</name>
    <name type="ORF">T13K14.120</name>
</gene>
<feature type="transit peptide" description="Chloroplast" evidence="2">
    <location>
        <begin position="1"/>
        <end position="61"/>
    </location>
</feature>
<feature type="chain" id="PRO_0000422704" description="Riboflavin biosynthesis protein PYRD, chloroplastic">
    <location>
        <begin position="62"/>
        <end position="426"/>
    </location>
</feature>
<feature type="domain" description="CMP/dCMP-type deaminase" evidence="3">
    <location>
        <begin position="72"/>
        <end position="194"/>
    </location>
</feature>
<feature type="active site" description="Proton donor" evidence="1">
    <location>
        <position position="123"/>
    </location>
</feature>
<feature type="binding site" evidence="1">
    <location>
        <position position="121"/>
    </location>
    <ligand>
        <name>Zn(2+)</name>
        <dbReference type="ChEBI" id="CHEBI:29105"/>
        <note>catalytic</note>
    </ligand>
</feature>
<feature type="binding site" evidence="1">
    <location>
        <position position="146"/>
    </location>
    <ligand>
        <name>Zn(2+)</name>
        <dbReference type="ChEBI" id="CHEBI:29105"/>
        <note>catalytic</note>
    </ligand>
</feature>
<feature type="binding site" evidence="1">
    <location>
        <position position="155"/>
    </location>
    <ligand>
        <name>Zn(2+)</name>
        <dbReference type="ChEBI" id="CHEBI:29105"/>
        <note>catalytic</note>
    </ligand>
</feature>
<feature type="sequence conflict" description="In Ref. 5; AAM67209." evidence="6" ref="5">
    <original>R</original>
    <variation>K</variation>
    <location>
        <position position="65"/>
    </location>
</feature>